<gene>
    <name evidence="1" type="primary">murA</name>
    <name type="ordered locus">Cvib_1214</name>
</gene>
<sequence>MDKLVIQGGTRLEGTIAASGSKNSSLPIIAATLLAGTGLFRLHRIPDLKDIATFRSLLHHLGAESHFEDGILEISTSKVKSARAPYELVKKMRASIYVLGPLLARFGHAEVSLPGGCAFGPRPIDLHLMAMEKLGATITIKTGFIEATTNKGRLQGGQIDFPVSSVGATGNALMAAALAEGTTTITNAAAEPEIEALCHFLAAMGSPITGIGTTTLTIEGRPTLQPIEFNNVFDRIEAGTLLAAAAITGGSITLTDTDPEQMQSVLEAFTRSGCTVTTNGHSISLKSPGALQPVNITAEPYPAFPTDMQAQWMALMTQAEGTSLITDRIYHERFNHIPELNRLGAHIDITDNQAVVHGPQRLSGTKVMSTDLRASASLVLAGLVAEGTTEVLRVYHLDRGYERIEEKLRRLGARIERQKYDEFS</sequence>
<accession>A4SFG7</accession>
<dbReference type="EC" id="2.5.1.7" evidence="1"/>
<dbReference type="EMBL" id="CP000607">
    <property type="protein sequence ID" value="ABP37226.1"/>
    <property type="molecule type" value="Genomic_DNA"/>
</dbReference>
<dbReference type="SMR" id="A4SFG7"/>
<dbReference type="STRING" id="290318.Cvib_1214"/>
<dbReference type="KEGG" id="pvi:Cvib_1214"/>
<dbReference type="eggNOG" id="COG0766">
    <property type="taxonomic scope" value="Bacteria"/>
</dbReference>
<dbReference type="HOGENOM" id="CLU_027387_0_0_10"/>
<dbReference type="OrthoDB" id="9803760at2"/>
<dbReference type="UniPathway" id="UPA00219"/>
<dbReference type="GO" id="GO:0005737">
    <property type="term" value="C:cytoplasm"/>
    <property type="evidence" value="ECO:0007669"/>
    <property type="project" value="UniProtKB-SubCell"/>
</dbReference>
<dbReference type="GO" id="GO:0008760">
    <property type="term" value="F:UDP-N-acetylglucosamine 1-carboxyvinyltransferase activity"/>
    <property type="evidence" value="ECO:0007669"/>
    <property type="project" value="UniProtKB-UniRule"/>
</dbReference>
<dbReference type="GO" id="GO:0051301">
    <property type="term" value="P:cell division"/>
    <property type="evidence" value="ECO:0007669"/>
    <property type="project" value="UniProtKB-KW"/>
</dbReference>
<dbReference type="GO" id="GO:0071555">
    <property type="term" value="P:cell wall organization"/>
    <property type="evidence" value="ECO:0007669"/>
    <property type="project" value="UniProtKB-KW"/>
</dbReference>
<dbReference type="GO" id="GO:0009252">
    <property type="term" value="P:peptidoglycan biosynthetic process"/>
    <property type="evidence" value="ECO:0007669"/>
    <property type="project" value="UniProtKB-UniRule"/>
</dbReference>
<dbReference type="GO" id="GO:0008360">
    <property type="term" value="P:regulation of cell shape"/>
    <property type="evidence" value="ECO:0007669"/>
    <property type="project" value="UniProtKB-KW"/>
</dbReference>
<dbReference type="GO" id="GO:0019277">
    <property type="term" value="P:UDP-N-acetylgalactosamine biosynthetic process"/>
    <property type="evidence" value="ECO:0007669"/>
    <property type="project" value="InterPro"/>
</dbReference>
<dbReference type="CDD" id="cd01555">
    <property type="entry name" value="UdpNAET"/>
    <property type="match status" value="1"/>
</dbReference>
<dbReference type="Gene3D" id="3.65.10.10">
    <property type="entry name" value="Enolpyruvate transferase domain"/>
    <property type="match status" value="2"/>
</dbReference>
<dbReference type="HAMAP" id="MF_00111">
    <property type="entry name" value="MurA"/>
    <property type="match status" value="1"/>
</dbReference>
<dbReference type="InterPro" id="IPR001986">
    <property type="entry name" value="Enolpyruvate_Tfrase_dom"/>
</dbReference>
<dbReference type="InterPro" id="IPR036968">
    <property type="entry name" value="Enolpyruvate_Tfrase_sf"/>
</dbReference>
<dbReference type="InterPro" id="IPR050068">
    <property type="entry name" value="MurA_subfamily"/>
</dbReference>
<dbReference type="InterPro" id="IPR013792">
    <property type="entry name" value="RNA3'P_cycl/enolpyr_Trfase_a/b"/>
</dbReference>
<dbReference type="InterPro" id="IPR005750">
    <property type="entry name" value="UDP_GlcNAc_COvinyl_MurA"/>
</dbReference>
<dbReference type="NCBIfam" id="TIGR01072">
    <property type="entry name" value="murA"/>
    <property type="match status" value="1"/>
</dbReference>
<dbReference type="NCBIfam" id="NF006873">
    <property type="entry name" value="PRK09369.1"/>
    <property type="match status" value="1"/>
</dbReference>
<dbReference type="PANTHER" id="PTHR43783">
    <property type="entry name" value="UDP-N-ACETYLGLUCOSAMINE 1-CARBOXYVINYLTRANSFERASE"/>
    <property type="match status" value="1"/>
</dbReference>
<dbReference type="PANTHER" id="PTHR43783:SF1">
    <property type="entry name" value="UDP-N-ACETYLGLUCOSAMINE 1-CARBOXYVINYLTRANSFERASE"/>
    <property type="match status" value="1"/>
</dbReference>
<dbReference type="Pfam" id="PF00275">
    <property type="entry name" value="EPSP_synthase"/>
    <property type="match status" value="1"/>
</dbReference>
<dbReference type="SUPFAM" id="SSF55205">
    <property type="entry name" value="EPT/RTPC-like"/>
    <property type="match status" value="1"/>
</dbReference>
<comment type="function">
    <text evidence="1">Cell wall formation. Adds enolpyruvyl to UDP-N-acetylglucosamine.</text>
</comment>
<comment type="catalytic activity">
    <reaction evidence="1">
        <text>phosphoenolpyruvate + UDP-N-acetyl-alpha-D-glucosamine = UDP-N-acetyl-3-O-(1-carboxyvinyl)-alpha-D-glucosamine + phosphate</text>
        <dbReference type="Rhea" id="RHEA:18681"/>
        <dbReference type="ChEBI" id="CHEBI:43474"/>
        <dbReference type="ChEBI" id="CHEBI:57705"/>
        <dbReference type="ChEBI" id="CHEBI:58702"/>
        <dbReference type="ChEBI" id="CHEBI:68483"/>
        <dbReference type="EC" id="2.5.1.7"/>
    </reaction>
</comment>
<comment type="pathway">
    <text evidence="1">Cell wall biogenesis; peptidoglycan biosynthesis.</text>
</comment>
<comment type="subcellular location">
    <subcellularLocation>
        <location evidence="1">Cytoplasm</location>
    </subcellularLocation>
</comment>
<comment type="similarity">
    <text evidence="1">Belongs to the EPSP synthase family. MurA subfamily.</text>
</comment>
<feature type="chain" id="PRO_1000075977" description="UDP-N-acetylglucosamine 1-carboxyvinyltransferase">
    <location>
        <begin position="1"/>
        <end position="424"/>
    </location>
</feature>
<feature type="active site" description="Proton donor" evidence="1">
    <location>
        <position position="117"/>
    </location>
</feature>
<feature type="binding site" evidence="1">
    <location>
        <begin position="22"/>
        <end position="23"/>
    </location>
    <ligand>
        <name>phosphoenolpyruvate</name>
        <dbReference type="ChEBI" id="CHEBI:58702"/>
    </ligand>
</feature>
<feature type="binding site" evidence="1">
    <location>
        <position position="93"/>
    </location>
    <ligand>
        <name>UDP-N-acetyl-alpha-D-glucosamine</name>
        <dbReference type="ChEBI" id="CHEBI:57705"/>
    </ligand>
</feature>
<feature type="binding site" evidence="1">
    <location>
        <begin position="122"/>
        <end position="126"/>
    </location>
    <ligand>
        <name>UDP-N-acetyl-alpha-D-glucosamine</name>
        <dbReference type="ChEBI" id="CHEBI:57705"/>
    </ligand>
</feature>
<feature type="binding site" evidence="1">
    <location>
        <position position="307"/>
    </location>
    <ligand>
        <name>UDP-N-acetyl-alpha-D-glucosamine</name>
        <dbReference type="ChEBI" id="CHEBI:57705"/>
    </ligand>
</feature>
<feature type="binding site" evidence="1">
    <location>
        <position position="329"/>
    </location>
    <ligand>
        <name>UDP-N-acetyl-alpha-D-glucosamine</name>
        <dbReference type="ChEBI" id="CHEBI:57705"/>
    </ligand>
</feature>
<feature type="modified residue" description="2-(S-cysteinyl)pyruvic acid O-phosphothioketal" evidence="1">
    <location>
        <position position="117"/>
    </location>
</feature>
<protein>
    <recommendedName>
        <fullName evidence="1">UDP-N-acetylglucosamine 1-carboxyvinyltransferase</fullName>
        <ecNumber evidence="1">2.5.1.7</ecNumber>
    </recommendedName>
    <alternativeName>
        <fullName evidence="1">Enoylpyruvate transferase</fullName>
    </alternativeName>
    <alternativeName>
        <fullName evidence="1">UDP-N-acetylglucosamine enolpyruvyl transferase</fullName>
        <shortName evidence="1">EPT</shortName>
    </alternativeName>
</protein>
<reference key="1">
    <citation type="submission" date="2007-03" db="EMBL/GenBank/DDBJ databases">
        <title>Complete sequence of Prosthecochloris vibrioformis DSM 265.</title>
        <authorList>
            <consortium name="US DOE Joint Genome Institute"/>
            <person name="Copeland A."/>
            <person name="Lucas S."/>
            <person name="Lapidus A."/>
            <person name="Barry K."/>
            <person name="Detter J.C."/>
            <person name="Glavina del Rio T."/>
            <person name="Hammon N."/>
            <person name="Israni S."/>
            <person name="Pitluck S."/>
            <person name="Schmutz J."/>
            <person name="Larimer F."/>
            <person name="Land M."/>
            <person name="Hauser L."/>
            <person name="Mikhailova N."/>
            <person name="Li T."/>
            <person name="Overmann J."/>
            <person name="Schuster S.C."/>
            <person name="Bryant D.A."/>
            <person name="Richardson P."/>
        </authorList>
    </citation>
    <scope>NUCLEOTIDE SEQUENCE [LARGE SCALE GENOMIC DNA]</scope>
    <source>
        <strain>DSM 265 / 1930</strain>
    </source>
</reference>
<organism>
    <name type="scientific">Chlorobium phaeovibrioides (strain DSM 265 / 1930)</name>
    <name type="common">Prosthecochloris vibrioformis (strain DSM 265)</name>
    <dbReference type="NCBI Taxonomy" id="290318"/>
    <lineage>
        <taxon>Bacteria</taxon>
        <taxon>Pseudomonadati</taxon>
        <taxon>Chlorobiota</taxon>
        <taxon>Chlorobiia</taxon>
        <taxon>Chlorobiales</taxon>
        <taxon>Chlorobiaceae</taxon>
        <taxon>Chlorobium/Pelodictyon group</taxon>
        <taxon>Chlorobium</taxon>
    </lineage>
</organism>
<keyword id="KW-0131">Cell cycle</keyword>
<keyword id="KW-0132">Cell division</keyword>
<keyword id="KW-0133">Cell shape</keyword>
<keyword id="KW-0961">Cell wall biogenesis/degradation</keyword>
<keyword id="KW-0963">Cytoplasm</keyword>
<keyword id="KW-0573">Peptidoglycan synthesis</keyword>
<keyword id="KW-0670">Pyruvate</keyword>
<keyword id="KW-0808">Transferase</keyword>
<evidence type="ECO:0000255" key="1">
    <source>
        <dbReference type="HAMAP-Rule" id="MF_00111"/>
    </source>
</evidence>
<proteinExistence type="inferred from homology"/>
<name>MURA_CHLPM</name>